<feature type="signal peptide" evidence="2">
    <location>
        <begin position="1"/>
        <end position="21"/>
    </location>
</feature>
<feature type="chain" id="PRO_0000025564" description="Putative dehydrogenase XoxF">
    <location>
        <begin position="22"/>
        <end position="600"/>
    </location>
</feature>
<feature type="active site" description="Proton acceptor" evidence="2">
    <location>
        <position position="318"/>
    </location>
</feature>
<feature type="binding site" evidence="1">
    <location>
        <position position="192"/>
    </location>
    <ligand>
        <name>Ca(2+)</name>
        <dbReference type="ChEBI" id="CHEBI:29108"/>
    </ligand>
</feature>
<feature type="binding site" evidence="1">
    <location>
        <position position="276"/>
    </location>
    <ligand>
        <name>Ca(2+)</name>
        <dbReference type="ChEBI" id="CHEBI:29108"/>
    </ligand>
</feature>
<dbReference type="EC" id="1.1.99.-"/>
<dbReference type="EMBL" id="U34346">
    <property type="protein sequence ID" value="AAC44555.1"/>
    <property type="molecule type" value="Genomic_DNA"/>
</dbReference>
<dbReference type="EMBL" id="M75583">
    <property type="protein sequence ID" value="AAA25574.1"/>
    <property type="molecule type" value="Genomic_DNA"/>
</dbReference>
<dbReference type="PIR" id="A41378">
    <property type="entry name" value="A41378"/>
</dbReference>
<dbReference type="SMR" id="P29968"/>
<dbReference type="GO" id="GO:0016020">
    <property type="term" value="C:membrane"/>
    <property type="evidence" value="ECO:0007669"/>
    <property type="project" value="InterPro"/>
</dbReference>
<dbReference type="GO" id="GO:0030288">
    <property type="term" value="C:outer membrane-bounded periplasmic space"/>
    <property type="evidence" value="ECO:0007669"/>
    <property type="project" value="InterPro"/>
</dbReference>
<dbReference type="GO" id="GO:0005509">
    <property type="term" value="F:calcium ion binding"/>
    <property type="evidence" value="ECO:0007669"/>
    <property type="project" value="InterPro"/>
</dbReference>
<dbReference type="GO" id="GO:0016614">
    <property type="term" value="F:oxidoreductase activity, acting on CH-OH group of donors"/>
    <property type="evidence" value="ECO:0007669"/>
    <property type="project" value="InterPro"/>
</dbReference>
<dbReference type="CDD" id="cd10278">
    <property type="entry name" value="PQQ_MDH"/>
    <property type="match status" value="1"/>
</dbReference>
<dbReference type="FunFam" id="2.140.10.10:FF:000003">
    <property type="entry name" value="Methanol dehydrogenase, large subunit"/>
    <property type="match status" value="1"/>
</dbReference>
<dbReference type="Gene3D" id="2.140.10.10">
    <property type="entry name" value="Quinoprotein alcohol dehydrogenase-like superfamily"/>
    <property type="match status" value="1"/>
</dbReference>
<dbReference type="InterPro" id="IPR018391">
    <property type="entry name" value="PQQ_b-propeller_rpt"/>
</dbReference>
<dbReference type="InterPro" id="IPR017512">
    <property type="entry name" value="PQQ_MeOH/EtOH_DH"/>
</dbReference>
<dbReference type="InterPro" id="IPR002372">
    <property type="entry name" value="PQQ_rpt_dom"/>
</dbReference>
<dbReference type="InterPro" id="IPR011047">
    <property type="entry name" value="Quinoprotein_ADH-like_sf"/>
</dbReference>
<dbReference type="InterPro" id="IPR001479">
    <property type="entry name" value="Quinoprotein_DH_CS"/>
</dbReference>
<dbReference type="NCBIfam" id="TIGR03075">
    <property type="entry name" value="PQQ_enz_alc_DH"/>
    <property type="match status" value="1"/>
</dbReference>
<dbReference type="PANTHER" id="PTHR32303">
    <property type="entry name" value="QUINOPROTEIN ALCOHOL DEHYDROGENASE (CYTOCHROME C)"/>
    <property type="match status" value="1"/>
</dbReference>
<dbReference type="PANTHER" id="PTHR32303:SF4">
    <property type="entry name" value="QUINOPROTEIN GLUCOSE DEHYDROGENASE"/>
    <property type="match status" value="1"/>
</dbReference>
<dbReference type="Pfam" id="PF01011">
    <property type="entry name" value="PQQ"/>
    <property type="match status" value="2"/>
</dbReference>
<dbReference type="SMART" id="SM00564">
    <property type="entry name" value="PQQ"/>
    <property type="match status" value="5"/>
</dbReference>
<dbReference type="SUPFAM" id="SSF50998">
    <property type="entry name" value="Quinoprotein alcohol dehydrogenase-like"/>
    <property type="match status" value="1"/>
</dbReference>
<dbReference type="PROSITE" id="PS00364">
    <property type="entry name" value="BACTERIAL_PQQ_2"/>
    <property type="match status" value="1"/>
</dbReference>
<name>XOXF_PARDE</name>
<organism>
    <name type="scientific">Paracoccus denitrificans</name>
    <dbReference type="NCBI Taxonomy" id="266"/>
    <lineage>
        <taxon>Bacteria</taxon>
        <taxon>Pseudomonadati</taxon>
        <taxon>Pseudomonadota</taxon>
        <taxon>Alphaproteobacteria</taxon>
        <taxon>Rhodobacterales</taxon>
        <taxon>Paracoccaceae</taxon>
        <taxon>Paracoccus</taxon>
    </lineage>
</organism>
<comment type="cofactor">
    <cofactor evidence="1">
        <name>pyrroloquinoline quinone</name>
        <dbReference type="ChEBI" id="CHEBI:58442"/>
    </cofactor>
    <text evidence="1">Binds 1 PQQ group per subunit.</text>
</comment>
<comment type="cofactor">
    <cofactor evidence="1">
        <name>Ca(2+)</name>
        <dbReference type="ChEBI" id="CHEBI:29108"/>
    </cofactor>
    <text evidence="1">Binds 1 Ca(2+) ion per subunit.</text>
</comment>
<comment type="similarity">
    <text evidence="3">Belongs to the bacterial PQQ dehydrogenase family.</text>
</comment>
<reference key="1">
    <citation type="submission" date="1995-08" db="EMBL/GenBank/DDBJ databases">
        <authorList>
            <person name="Harms N."/>
        </authorList>
    </citation>
    <scope>NUCLEOTIDE SEQUENCE [GENOMIC DNA]</scope>
</reference>
<reference key="2">
    <citation type="journal article" date="1991" name="J. Bacteriol.">
        <title>Isolation, sequencing, and mutagenesis of the gene encoding cytochrome c553i of Paracoccus denitrificans and characterization of the mutant strain.</title>
        <authorList>
            <person name="Ras J."/>
            <person name="Reijnders W.N.M."/>
            <person name="van Spanning R.J.M."/>
            <person name="Harms N."/>
            <person name="Oltmann L.F."/>
            <person name="Stouthamer A.H."/>
        </authorList>
    </citation>
    <scope>NUCLEOTIDE SEQUENCE [GENOMIC DNA] OF 380-600</scope>
    <source>
        <strain>Pd 1235</strain>
    </source>
</reference>
<protein>
    <recommendedName>
        <fullName>Putative dehydrogenase XoxF</fullName>
        <ecNumber>1.1.99.-</ecNumber>
    </recommendedName>
</protein>
<gene>
    <name type="primary">xoxF</name>
</gene>
<evidence type="ECO:0000250" key="1"/>
<evidence type="ECO:0000255" key="2"/>
<evidence type="ECO:0000305" key="3"/>
<sequence length="600" mass="65159">MKNLMNGACLALLMSGTAALANEQRAGRDRQAPQWAIQMGDYANTRYSTLDQINKDNVKDLRVAWTFSTGVLRGHEGSPLVIGDVMYVHTPFPNRVFALDLNDNGKILWRYEPQQDPNVIAVMSCDTVYRGLSYADGMILLGQADTTVVALDATSGEVKWSTKIGDPGIGETLTATVVPVKDKVLVGISGGEYGVRGRMTALNLTDGSEAWKAWSTGPDEELLVDPETTTHLGKPIGADSSLNSWEGDQWQIGGGTIWGWFSYDPDLNLVYYGTGNPSTWNPSQRPGDNKWSMTIMARDADTGMAKWFYQMTPHDEWDYDGVNEMILTNQTVDGQERKLLTHFDRNGLAYTMDRETGELLVAEKYDPVVNWTTGVDMDPNSETYGRPAVVAEYSTAQNGEDENTTGVCPAALGTKDQQPAAFSPKTNLFYVPTNHVCMDYEPFRVAYTAGQPYVGATLSMYPAPNSHGGMGNFIAWHNTTGEIKWSVPEQFSVWSGALATAGDVVFYGTLEGYLKPVDAQTGEELYKFKTPSGIIGNVMTYEHGGKQYVGILSGVGGWAGIGLAAGLTNPNDGLGAVGGYASLSQYTELGGQLTVFELPG</sequence>
<accession>P29968</accession>
<proteinExistence type="inferred from homology"/>
<keyword id="KW-0106">Calcium</keyword>
<keyword id="KW-0479">Metal-binding</keyword>
<keyword id="KW-0560">Oxidoreductase</keyword>
<keyword id="KW-0634">PQQ</keyword>
<keyword id="KW-0732">Signal</keyword>